<gene>
    <name evidence="7" type="primary">CIMAP3</name>
    <name type="synonym">C1orf88</name>
    <name type="synonym">PIFO</name>
</gene>
<comment type="function">
    <text evidence="3">During primary cilia disassembly, involved in cilia disassembly. Required specifically to control cilia retraction as well as the liberation and duplication of the basal body/centrosome. May act by stimulating AURKA activity at the basal body in a cell cycle-dependent manner.</text>
</comment>
<comment type="subunit">
    <text evidence="3">Interacts with proteins involved in ciliary transport, including ARL13B, CETN1, KIF3A, RAB6A, RAB8A, TUBB1 and TUBG1. Interacts with AURKA.</text>
</comment>
<comment type="subcellular location">
    <subcellularLocation>
        <location evidence="1">Cytoplasmic vesicle</location>
    </subcellularLocation>
    <subcellularLocation>
        <location evidence="1">Golgi apparatus</location>
        <location evidence="1">trans-Golgi network</location>
    </subcellularLocation>
    <subcellularLocation>
        <location evidence="1">Cytoplasm</location>
    </subcellularLocation>
    <text evidence="1">Accumulates specifically at the basal body and ciliary necklace during the early steps of cilia assembly and disassembly, when structural, functional and regulatory proteins are delivered to cilia. At S phase, accumulates in vesicles and declines during mitosis.</text>
</comment>
<comment type="alternative products">
    <event type="alternative splicing"/>
    <isoform>
        <id>Q8TCI5-1</id>
        <name>1</name>
        <sequence type="displayed"/>
    </isoform>
    <isoform>
        <id>Q8TCI5-2</id>
        <name>2</name>
        <sequence type="described" ref="VSP_024557"/>
    </isoform>
    <isoform>
        <id>Q8TCI5-3</id>
        <name>3</name>
        <sequence type="described" ref="VSP_042040"/>
    </isoform>
</comment>
<accession>Q8TCI5</accession>
<accession>D9J0A2</accession>
<accession>D9J0A3</accession>
<accession>Q4G0K4</accession>
<accession>Q52LJ6</accession>
<accession>Q5T5D5</accession>
<accession>Q5T5D6</accession>
<accession>Q8N310</accession>
<sequence length="191" mass="21973">MCFSRADAADNYPFGTCQQRKLFPHFHPPNLIGNKFVPLRGSPHRGPGCYFSDGYGLAYDLSKIPTSIKGYTLGARTAVRFKPIQKEMTPHAGRYQKVSPQQEKHKQNFAPFNVLVPRFKNYPKDTYYPSPGAYNPEKKPPPKIAWPMKFGSPDWAQVPCLQKRTLKAELSTDKDFRKHRNRVAYLSLYYN</sequence>
<name>CMAP3_HUMAN</name>
<reference key="1">
    <citation type="journal article" date="2010" name="Dev. Cell">
        <title>Pitchfork regulates primary cilia disassembly and left-right asymmetry.</title>
        <authorList>
            <person name="Kinzel D."/>
            <person name="Boldt K."/>
            <person name="Davis E.E."/>
            <person name="Burtscher I."/>
            <person name="Trumbach D."/>
            <person name="Diplas B."/>
            <person name="Attie-Bitach T."/>
            <person name="Wurst W."/>
            <person name="Katsanis N."/>
            <person name="Ueffing M."/>
            <person name="Lickert H."/>
        </authorList>
    </citation>
    <scope>NUCLEOTIDE SEQUENCE [MRNA] (ISOFORM 1)</scope>
    <scope>FUNCTION</scope>
    <scope>INTERACTION WITH ARL13B; AURKA; CETN1; KIF3A; RAB6A; RAB8A; TUBB1 AND TUBG1</scope>
    <scope>VARIANTS LYS-80 AND ASN-105</scope>
</reference>
<reference key="2">
    <citation type="journal article" date="2004" name="Nat. Genet.">
        <title>Complete sequencing and characterization of 21,243 full-length human cDNAs.</title>
        <authorList>
            <person name="Ota T."/>
            <person name="Suzuki Y."/>
            <person name="Nishikawa T."/>
            <person name="Otsuki T."/>
            <person name="Sugiyama T."/>
            <person name="Irie R."/>
            <person name="Wakamatsu A."/>
            <person name="Hayashi K."/>
            <person name="Sato H."/>
            <person name="Nagai K."/>
            <person name="Kimura K."/>
            <person name="Makita H."/>
            <person name="Sekine M."/>
            <person name="Obayashi M."/>
            <person name="Nishi T."/>
            <person name="Shibahara T."/>
            <person name="Tanaka T."/>
            <person name="Ishii S."/>
            <person name="Yamamoto J."/>
            <person name="Saito K."/>
            <person name="Kawai Y."/>
            <person name="Isono Y."/>
            <person name="Nakamura Y."/>
            <person name="Nagahari K."/>
            <person name="Murakami K."/>
            <person name="Yasuda T."/>
            <person name="Iwayanagi T."/>
            <person name="Wagatsuma M."/>
            <person name="Shiratori A."/>
            <person name="Sudo H."/>
            <person name="Hosoiri T."/>
            <person name="Kaku Y."/>
            <person name="Kodaira H."/>
            <person name="Kondo H."/>
            <person name="Sugawara M."/>
            <person name="Takahashi M."/>
            <person name="Kanda K."/>
            <person name="Yokoi T."/>
            <person name="Furuya T."/>
            <person name="Kikkawa E."/>
            <person name="Omura Y."/>
            <person name="Abe K."/>
            <person name="Kamihara K."/>
            <person name="Katsuta N."/>
            <person name="Sato K."/>
            <person name="Tanikawa M."/>
            <person name="Yamazaki M."/>
            <person name="Ninomiya K."/>
            <person name="Ishibashi T."/>
            <person name="Yamashita H."/>
            <person name="Murakawa K."/>
            <person name="Fujimori K."/>
            <person name="Tanai H."/>
            <person name="Kimata M."/>
            <person name="Watanabe M."/>
            <person name="Hiraoka S."/>
            <person name="Chiba Y."/>
            <person name="Ishida S."/>
            <person name="Ono Y."/>
            <person name="Takiguchi S."/>
            <person name="Watanabe S."/>
            <person name="Yosida M."/>
            <person name="Hotuta T."/>
            <person name="Kusano J."/>
            <person name="Kanehori K."/>
            <person name="Takahashi-Fujii A."/>
            <person name="Hara H."/>
            <person name="Tanase T.-O."/>
            <person name="Nomura Y."/>
            <person name="Togiya S."/>
            <person name="Komai F."/>
            <person name="Hara R."/>
            <person name="Takeuchi K."/>
            <person name="Arita M."/>
            <person name="Imose N."/>
            <person name="Musashino K."/>
            <person name="Yuuki H."/>
            <person name="Oshima A."/>
            <person name="Sasaki N."/>
            <person name="Aotsuka S."/>
            <person name="Yoshikawa Y."/>
            <person name="Matsunawa H."/>
            <person name="Ichihara T."/>
            <person name="Shiohata N."/>
            <person name="Sano S."/>
            <person name="Moriya S."/>
            <person name="Momiyama H."/>
            <person name="Satoh N."/>
            <person name="Takami S."/>
            <person name="Terashima Y."/>
            <person name="Suzuki O."/>
            <person name="Nakagawa S."/>
            <person name="Senoh A."/>
            <person name="Mizoguchi H."/>
            <person name="Goto Y."/>
            <person name="Shimizu F."/>
            <person name="Wakebe H."/>
            <person name="Hishigaki H."/>
            <person name="Watanabe T."/>
            <person name="Sugiyama A."/>
            <person name="Takemoto M."/>
            <person name="Kawakami B."/>
            <person name="Yamazaki M."/>
            <person name="Watanabe K."/>
            <person name="Kumagai A."/>
            <person name="Itakura S."/>
            <person name="Fukuzumi Y."/>
            <person name="Fujimori Y."/>
            <person name="Komiyama M."/>
            <person name="Tashiro H."/>
            <person name="Tanigami A."/>
            <person name="Fujiwara T."/>
            <person name="Ono T."/>
            <person name="Yamada K."/>
            <person name="Fujii Y."/>
            <person name="Ozaki K."/>
            <person name="Hirao M."/>
            <person name="Ohmori Y."/>
            <person name="Kawabata A."/>
            <person name="Hikiji T."/>
            <person name="Kobatake N."/>
            <person name="Inagaki H."/>
            <person name="Ikema Y."/>
            <person name="Okamoto S."/>
            <person name="Okitani R."/>
            <person name="Kawakami T."/>
            <person name="Noguchi S."/>
            <person name="Itoh T."/>
            <person name="Shigeta K."/>
            <person name="Senba T."/>
            <person name="Matsumura K."/>
            <person name="Nakajima Y."/>
            <person name="Mizuno T."/>
            <person name="Morinaga M."/>
            <person name="Sasaki M."/>
            <person name="Togashi T."/>
            <person name="Oyama M."/>
            <person name="Hata H."/>
            <person name="Watanabe M."/>
            <person name="Komatsu T."/>
            <person name="Mizushima-Sugano J."/>
            <person name="Satoh T."/>
            <person name="Shirai Y."/>
            <person name="Takahashi Y."/>
            <person name="Nakagawa K."/>
            <person name="Okumura K."/>
            <person name="Nagase T."/>
            <person name="Nomura N."/>
            <person name="Kikuchi H."/>
            <person name="Masuho Y."/>
            <person name="Yamashita R."/>
            <person name="Nakai K."/>
            <person name="Yada T."/>
            <person name="Nakamura Y."/>
            <person name="Ohara O."/>
            <person name="Isogai T."/>
            <person name="Sugano S."/>
        </authorList>
    </citation>
    <scope>NUCLEOTIDE SEQUENCE [LARGE SCALE MRNA] (ISOFORMS 1 AND 3)</scope>
    <source>
        <tissue>Lung</tissue>
    </source>
</reference>
<reference key="3">
    <citation type="journal article" date="2006" name="Nature">
        <title>The DNA sequence and biological annotation of human chromosome 1.</title>
        <authorList>
            <person name="Gregory S.G."/>
            <person name="Barlow K.F."/>
            <person name="McLay K.E."/>
            <person name="Kaul R."/>
            <person name="Swarbreck D."/>
            <person name="Dunham A."/>
            <person name="Scott C.E."/>
            <person name="Howe K.L."/>
            <person name="Woodfine K."/>
            <person name="Spencer C.C.A."/>
            <person name="Jones M.C."/>
            <person name="Gillson C."/>
            <person name="Searle S."/>
            <person name="Zhou Y."/>
            <person name="Kokocinski F."/>
            <person name="McDonald L."/>
            <person name="Evans R."/>
            <person name="Phillips K."/>
            <person name="Atkinson A."/>
            <person name="Cooper R."/>
            <person name="Jones C."/>
            <person name="Hall R.E."/>
            <person name="Andrews T.D."/>
            <person name="Lloyd C."/>
            <person name="Ainscough R."/>
            <person name="Almeida J.P."/>
            <person name="Ambrose K.D."/>
            <person name="Anderson F."/>
            <person name="Andrew R.W."/>
            <person name="Ashwell R.I.S."/>
            <person name="Aubin K."/>
            <person name="Babbage A.K."/>
            <person name="Bagguley C.L."/>
            <person name="Bailey J."/>
            <person name="Beasley H."/>
            <person name="Bethel G."/>
            <person name="Bird C.P."/>
            <person name="Bray-Allen S."/>
            <person name="Brown J.Y."/>
            <person name="Brown A.J."/>
            <person name="Buckley D."/>
            <person name="Burton J."/>
            <person name="Bye J."/>
            <person name="Carder C."/>
            <person name="Chapman J.C."/>
            <person name="Clark S.Y."/>
            <person name="Clarke G."/>
            <person name="Clee C."/>
            <person name="Cobley V."/>
            <person name="Collier R.E."/>
            <person name="Corby N."/>
            <person name="Coville G.J."/>
            <person name="Davies J."/>
            <person name="Deadman R."/>
            <person name="Dunn M."/>
            <person name="Earthrowl M."/>
            <person name="Ellington A.G."/>
            <person name="Errington H."/>
            <person name="Frankish A."/>
            <person name="Frankland J."/>
            <person name="French L."/>
            <person name="Garner P."/>
            <person name="Garnett J."/>
            <person name="Gay L."/>
            <person name="Ghori M.R.J."/>
            <person name="Gibson R."/>
            <person name="Gilby L.M."/>
            <person name="Gillett W."/>
            <person name="Glithero R.J."/>
            <person name="Grafham D.V."/>
            <person name="Griffiths C."/>
            <person name="Griffiths-Jones S."/>
            <person name="Grocock R."/>
            <person name="Hammond S."/>
            <person name="Harrison E.S.I."/>
            <person name="Hart E."/>
            <person name="Haugen E."/>
            <person name="Heath P.D."/>
            <person name="Holmes S."/>
            <person name="Holt K."/>
            <person name="Howden P.J."/>
            <person name="Hunt A.R."/>
            <person name="Hunt S.E."/>
            <person name="Hunter G."/>
            <person name="Isherwood J."/>
            <person name="James R."/>
            <person name="Johnson C."/>
            <person name="Johnson D."/>
            <person name="Joy A."/>
            <person name="Kay M."/>
            <person name="Kershaw J.K."/>
            <person name="Kibukawa M."/>
            <person name="Kimberley A.M."/>
            <person name="King A."/>
            <person name="Knights A.J."/>
            <person name="Lad H."/>
            <person name="Laird G."/>
            <person name="Lawlor S."/>
            <person name="Leongamornlert D.A."/>
            <person name="Lloyd D.M."/>
            <person name="Loveland J."/>
            <person name="Lovell J."/>
            <person name="Lush M.J."/>
            <person name="Lyne R."/>
            <person name="Martin S."/>
            <person name="Mashreghi-Mohammadi M."/>
            <person name="Matthews L."/>
            <person name="Matthews N.S.W."/>
            <person name="McLaren S."/>
            <person name="Milne S."/>
            <person name="Mistry S."/>
            <person name="Moore M.J.F."/>
            <person name="Nickerson T."/>
            <person name="O'Dell C.N."/>
            <person name="Oliver K."/>
            <person name="Palmeiri A."/>
            <person name="Palmer S.A."/>
            <person name="Parker A."/>
            <person name="Patel D."/>
            <person name="Pearce A.V."/>
            <person name="Peck A.I."/>
            <person name="Pelan S."/>
            <person name="Phelps K."/>
            <person name="Phillimore B.J."/>
            <person name="Plumb R."/>
            <person name="Rajan J."/>
            <person name="Raymond C."/>
            <person name="Rouse G."/>
            <person name="Saenphimmachak C."/>
            <person name="Sehra H.K."/>
            <person name="Sheridan E."/>
            <person name="Shownkeen R."/>
            <person name="Sims S."/>
            <person name="Skuce C.D."/>
            <person name="Smith M."/>
            <person name="Steward C."/>
            <person name="Subramanian S."/>
            <person name="Sycamore N."/>
            <person name="Tracey A."/>
            <person name="Tromans A."/>
            <person name="Van Helmond Z."/>
            <person name="Wall M."/>
            <person name="Wallis J.M."/>
            <person name="White S."/>
            <person name="Whitehead S.L."/>
            <person name="Wilkinson J.E."/>
            <person name="Willey D.L."/>
            <person name="Williams H."/>
            <person name="Wilming L."/>
            <person name="Wray P.W."/>
            <person name="Wu Z."/>
            <person name="Coulson A."/>
            <person name="Vaudin M."/>
            <person name="Sulston J.E."/>
            <person name="Durbin R.M."/>
            <person name="Hubbard T."/>
            <person name="Wooster R."/>
            <person name="Dunham I."/>
            <person name="Carter N.P."/>
            <person name="McVean G."/>
            <person name="Ross M.T."/>
            <person name="Harrow J."/>
            <person name="Olson M.V."/>
            <person name="Beck S."/>
            <person name="Rogers J."/>
            <person name="Bentley D.R."/>
        </authorList>
    </citation>
    <scope>NUCLEOTIDE SEQUENCE [LARGE SCALE GENOMIC DNA]</scope>
</reference>
<reference key="4">
    <citation type="journal article" date="2004" name="Genome Res.">
        <title>The status, quality, and expansion of the NIH full-length cDNA project: the Mammalian Gene Collection (MGC).</title>
        <authorList>
            <consortium name="The MGC Project Team"/>
        </authorList>
    </citation>
    <scope>NUCLEOTIDE SEQUENCE [LARGE SCALE MRNA] (ISOFORMS 1 AND 2)</scope>
    <scope>VARIANT ASN-105</scope>
    <source>
        <tissue>Brain</tissue>
        <tissue>Lung</tissue>
        <tissue>Testis</tissue>
    </source>
</reference>
<evidence type="ECO:0000250" key="1">
    <source>
        <dbReference type="UniProtKB" id="Q9D9W1"/>
    </source>
</evidence>
<evidence type="ECO:0000269" key="2">
    <source>
    </source>
</evidence>
<evidence type="ECO:0000269" key="3">
    <source>
    </source>
</evidence>
<evidence type="ECO:0000303" key="4">
    <source>
    </source>
</evidence>
<evidence type="ECO:0000303" key="5">
    <source>
    </source>
</evidence>
<evidence type="ECO:0000305" key="6"/>
<evidence type="ECO:0000312" key="7">
    <source>
        <dbReference type="HGNC" id="HGNC:27009"/>
    </source>
</evidence>
<dbReference type="EMBL" id="HM237139">
    <property type="protein sequence ID" value="ADI86276.1"/>
    <property type="molecule type" value="mRNA"/>
</dbReference>
<dbReference type="EMBL" id="HM237140">
    <property type="protein sequence ID" value="ADI86277.1"/>
    <property type="molecule type" value="mRNA"/>
</dbReference>
<dbReference type="EMBL" id="AK074433">
    <property type="protein sequence ID" value="BAB85081.1"/>
    <property type="molecule type" value="mRNA"/>
</dbReference>
<dbReference type="EMBL" id="AK303897">
    <property type="protein sequence ID" value="BAG64829.1"/>
    <property type="molecule type" value="mRNA"/>
</dbReference>
<dbReference type="EMBL" id="AL356387">
    <property type="status" value="NOT_ANNOTATED_CDS"/>
    <property type="molecule type" value="Genomic_DNA"/>
</dbReference>
<dbReference type="EMBL" id="BC029237">
    <property type="protein sequence ID" value="AAH29237.1"/>
    <property type="molecule type" value="mRNA"/>
</dbReference>
<dbReference type="EMBL" id="BC050319">
    <property type="protein sequence ID" value="AAH50319.1"/>
    <property type="molecule type" value="mRNA"/>
</dbReference>
<dbReference type="EMBL" id="BC093891">
    <property type="protein sequence ID" value="AAH93891.1"/>
    <property type="molecule type" value="mRNA"/>
</dbReference>
<dbReference type="EMBL" id="BC101501">
    <property type="protein sequence ID" value="AAI01502.1"/>
    <property type="molecule type" value="mRNA"/>
</dbReference>
<dbReference type="CCDS" id="CCDS72836.1">
    <molecule id="Q8TCI5-3"/>
</dbReference>
<dbReference type="CCDS" id="CCDS833.1">
    <molecule id="Q8TCI5-1"/>
</dbReference>
<dbReference type="RefSeq" id="NP_001287760.1">
    <molecule id="Q8TCI5-3"/>
    <property type="nucleotide sequence ID" value="NM_001300831.1"/>
</dbReference>
<dbReference type="RefSeq" id="NP_857594.2">
    <molecule id="Q8TCI5-1"/>
    <property type="nucleotide sequence ID" value="NM_181643.6"/>
</dbReference>
<dbReference type="SMR" id="Q8TCI5"/>
<dbReference type="BioGRID" id="126109">
    <property type="interactions" value="21"/>
</dbReference>
<dbReference type="FunCoup" id="Q8TCI5">
    <property type="interactions" value="52"/>
</dbReference>
<dbReference type="IntAct" id="Q8TCI5">
    <property type="interactions" value="8"/>
</dbReference>
<dbReference type="STRING" id="9606.ENSP00000358753"/>
<dbReference type="iPTMnet" id="Q8TCI5"/>
<dbReference type="PhosphoSitePlus" id="Q8TCI5"/>
<dbReference type="BioMuta" id="PIFO"/>
<dbReference type="DMDM" id="145558868"/>
<dbReference type="jPOST" id="Q8TCI5"/>
<dbReference type="MassIVE" id="Q8TCI5"/>
<dbReference type="PaxDb" id="9606-ENSP00000358753"/>
<dbReference type="PeptideAtlas" id="Q8TCI5"/>
<dbReference type="ProteomicsDB" id="74140">
    <molecule id="Q8TCI5-1"/>
</dbReference>
<dbReference type="ProteomicsDB" id="74141">
    <molecule id="Q8TCI5-2"/>
</dbReference>
<dbReference type="ProteomicsDB" id="74142">
    <molecule id="Q8TCI5-3"/>
</dbReference>
<dbReference type="Antibodypedia" id="53752">
    <property type="antibodies" value="6 antibodies from 5 providers"/>
</dbReference>
<dbReference type="DNASU" id="128344"/>
<dbReference type="Ensembl" id="ENST00000369737.4">
    <molecule id="Q8TCI5-3"/>
    <property type="protein sequence ID" value="ENSP00000358752.4"/>
    <property type="gene ID" value="ENSG00000173947.14"/>
</dbReference>
<dbReference type="Ensembl" id="ENST00000369738.9">
    <molecule id="Q8TCI5-1"/>
    <property type="protein sequence ID" value="ENSP00000358753.4"/>
    <property type="gene ID" value="ENSG00000173947.14"/>
</dbReference>
<dbReference type="GeneID" id="128344"/>
<dbReference type="KEGG" id="hsa:128344"/>
<dbReference type="MANE-Select" id="ENST00000369738.9">
    <property type="protein sequence ID" value="ENSP00000358753.4"/>
    <property type="RefSeq nucleotide sequence ID" value="NM_181643.6"/>
    <property type="RefSeq protein sequence ID" value="NP_857594.2"/>
</dbReference>
<dbReference type="UCSC" id="uc001eaw.3">
    <molecule id="Q8TCI5-1"/>
    <property type="organism name" value="human"/>
</dbReference>
<dbReference type="AGR" id="HGNC:27009"/>
<dbReference type="CTD" id="128344"/>
<dbReference type="DisGeNET" id="128344"/>
<dbReference type="GeneCards" id="CIMAP3"/>
<dbReference type="HGNC" id="HGNC:27009">
    <property type="gene designation" value="CIMAP3"/>
</dbReference>
<dbReference type="HPA" id="ENSG00000173947">
    <property type="expression patterns" value="Group enriched (choroid plexus, fallopian tube)"/>
</dbReference>
<dbReference type="MIM" id="614234">
    <property type="type" value="gene"/>
</dbReference>
<dbReference type="neXtProt" id="NX_Q8TCI5"/>
<dbReference type="OpenTargets" id="ENSG00000173947"/>
<dbReference type="PharmGKB" id="PA142672472"/>
<dbReference type="VEuPathDB" id="HostDB:ENSG00000173947"/>
<dbReference type="eggNOG" id="ENOG502RZWF">
    <property type="taxonomic scope" value="Eukaryota"/>
</dbReference>
<dbReference type="GeneTree" id="ENSGT00390000001017"/>
<dbReference type="HOGENOM" id="CLU_098763_0_0_1"/>
<dbReference type="InParanoid" id="Q8TCI5"/>
<dbReference type="OMA" id="HRHVTWP"/>
<dbReference type="PAN-GO" id="Q8TCI5">
    <property type="GO annotations" value="3 GO annotations based on evolutionary models"/>
</dbReference>
<dbReference type="PhylomeDB" id="Q8TCI5"/>
<dbReference type="TreeFam" id="TF328853"/>
<dbReference type="PathwayCommons" id="Q8TCI5"/>
<dbReference type="SignaLink" id="Q8TCI5"/>
<dbReference type="BioGRID-ORCS" id="128344">
    <property type="hits" value="45 hits in 1151 CRISPR screens"/>
</dbReference>
<dbReference type="GenomeRNAi" id="128344"/>
<dbReference type="Pharos" id="Q8TCI5">
    <property type="development level" value="Tbio"/>
</dbReference>
<dbReference type="PRO" id="PR:Q8TCI5"/>
<dbReference type="Proteomes" id="UP000005640">
    <property type="component" value="Chromosome 1"/>
</dbReference>
<dbReference type="RNAct" id="Q8TCI5">
    <property type="molecule type" value="protein"/>
</dbReference>
<dbReference type="Bgee" id="ENSG00000173947">
    <property type="expression patterns" value="Expressed in bronchial epithelial cell and 127 other cell types or tissues"/>
</dbReference>
<dbReference type="GO" id="GO:0036064">
    <property type="term" value="C:ciliary basal body"/>
    <property type="evidence" value="ECO:0000250"/>
    <property type="project" value="UniProtKB"/>
</dbReference>
<dbReference type="GO" id="GO:0031410">
    <property type="term" value="C:cytoplasmic vesicle"/>
    <property type="evidence" value="ECO:0007669"/>
    <property type="project" value="UniProtKB-KW"/>
</dbReference>
<dbReference type="GO" id="GO:0005634">
    <property type="term" value="C:nucleus"/>
    <property type="evidence" value="ECO:0007669"/>
    <property type="project" value="Ensembl"/>
</dbReference>
<dbReference type="GO" id="GO:0005802">
    <property type="term" value="C:trans-Golgi network"/>
    <property type="evidence" value="ECO:0000250"/>
    <property type="project" value="UniProtKB"/>
</dbReference>
<dbReference type="GO" id="GO:0048487">
    <property type="term" value="F:beta-tubulin binding"/>
    <property type="evidence" value="ECO:0000314"/>
    <property type="project" value="UniProtKB"/>
</dbReference>
<dbReference type="GO" id="GO:0008092">
    <property type="term" value="F:cytoskeletal protein binding"/>
    <property type="evidence" value="ECO:0000318"/>
    <property type="project" value="GO_Central"/>
</dbReference>
<dbReference type="GO" id="GO:0043015">
    <property type="term" value="F:gamma-tubulin binding"/>
    <property type="evidence" value="ECO:0000314"/>
    <property type="project" value="UniProtKB"/>
</dbReference>
<dbReference type="GO" id="GO:0019894">
    <property type="term" value="F:kinesin binding"/>
    <property type="evidence" value="ECO:0000353"/>
    <property type="project" value="UniProtKB"/>
</dbReference>
<dbReference type="GO" id="GO:0019901">
    <property type="term" value="F:protein kinase binding"/>
    <property type="evidence" value="ECO:0000353"/>
    <property type="project" value="UniProtKB"/>
</dbReference>
<dbReference type="GO" id="GO:0031267">
    <property type="term" value="F:small GTPase binding"/>
    <property type="evidence" value="ECO:0000353"/>
    <property type="project" value="UniProtKB"/>
</dbReference>
<dbReference type="GO" id="GO:0044782">
    <property type="term" value="P:cilium organization"/>
    <property type="evidence" value="ECO:0007669"/>
    <property type="project" value="Ensembl"/>
</dbReference>
<dbReference type="GO" id="GO:0060971">
    <property type="term" value="P:embryonic heart tube left/right pattern formation"/>
    <property type="evidence" value="ECO:0007669"/>
    <property type="project" value="Ensembl"/>
</dbReference>
<dbReference type="GO" id="GO:0033674">
    <property type="term" value="P:positive regulation of kinase activity"/>
    <property type="evidence" value="ECO:0000315"/>
    <property type="project" value="UniProtKB"/>
</dbReference>
<dbReference type="GO" id="GO:0031344">
    <property type="term" value="P:regulation of cell projection organization"/>
    <property type="evidence" value="ECO:0000250"/>
    <property type="project" value="UniProtKB"/>
</dbReference>
<dbReference type="InterPro" id="IPR033602">
    <property type="entry name" value="CIMAP3"/>
</dbReference>
<dbReference type="InterPro" id="IPR010736">
    <property type="entry name" value="SHIPPO-rpt"/>
</dbReference>
<dbReference type="PANTHER" id="PTHR31508">
    <property type="entry name" value="PROTEIN PITCHFORK"/>
    <property type="match status" value="1"/>
</dbReference>
<dbReference type="PANTHER" id="PTHR31508:SF2">
    <property type="entry name" value="PROTEIN PITCHFORK"/>
    <property type="match status" value="1"/>
</dbReference>
<dbReference type="Pfam" id="PF07004">
    <property type="entry name" value="SHIPPO-rpt"/>
    <property type="match status" value="2"/>
</dbReference>
<organism>
    <name type="scientific">Homo sapiens</name>
    <name type="common">Human</name>
    <dbReference type="NCBI Taxonomy" id="9606"/>
    <lineage>
        <taxon>Eukaryota</taxon>
        <taxon>Metazoa</taxon>
        <taxon>Chordata</taxon>
        <taxon>Craniata</taxon>
        <taxon>Vertebrata</taxon>
        <taxon>Euteleostomi</taxon>
        <taxon>Mammalia</taxon>
        <taxon>Eutheria</taxon>
        <taxon>Euarchontoglires</taxon>
        <taxon>Primates</taxon>
        <taxon>Haplorrhini</taxon>
        <taxon>Catarrhini</taxon>
        <taxon>Hominidae</taxon>
        <taxon>Homo</taxon>
    </lineage>
</organism>
<proteinExistence type="evidence at protein level"/>
<feature type="chain" id="PRO_0000284526" description="Ciliary microtubule-associated protein 3">
    <location>
        <begin position="1"/>
        <end position="191"/>
    </location>
</feature>
<feature type="splice variant" id="VSP_042040" description="In isoform 3." evidence="4">
    <location>
        <begin position="54"/>
        <end position="86"/>
    </location>
</feature>
<feature type="splice variant" id="VSP_024557" description="In isoform 2." evidence="5">
    <original>SPGAYNPEKKPPPKIAWPMKFGSPDWAQVPCLQKRTLKAELSTDKDFRKHRNRVAYLSLYYN</original>
    <variation>RYVSSLLVHFNKKSNRRKRST</variation>
    <location>
        <begin position="130"/>
        <end position="191"/>
    </location>
</feature>
<feature type="sequence variant" id="VAR_066484" description="Found in patients with severe ciliopathies and left-right asymmetry defects; inhibits AURKA activity; dbSNP:rs150508940." evidence="3">
    <original>R</original>
    <variation>K</variation>
    <location>
        <position position="80"/>
    </location>
</feature>
<feature type="sequence variant" id="VAR_031767" description="In dbSNP:rs15396.">
    <original>K</original>
    <variation>N</variation>
    <location>
        <position position="97"/>
    </location>
</feature>
<feature type="sequence variant" id="VAR_031768" description="In dbSNP:rs2184884." evidence="2 3">
    <original>H</original>
    <variation>N</variation>
    <location>
        <position position="105"/>
    </location>
</feature>
<feature type="sequence conflict" description="In Ref. 2; BAB85081." evidence="6" ref="2">
    <original>K</original>
    <variation>R</variation>
    <location>
        <position position="63"/>
    </location>
</feature>
<feature type="sequence conflict" description="In Ref. 4; AAH50319." evidence="6" ref="4">
    <original>N</original>
    <variation>D</variation>
    <location>
        <position position="121"/>
    </location>
</feature>
<keyword id="KW-0025">Alternative splicing</keyword>
<keyword id="KW-0970">Cilium biogenesis/degradation</keyword>
<keyword id="KW-0963">Cytoplasm</keyword>
<keyword id="KW-0968">Cytoplasmic vesicle</keyword>
<keyword id="KW-0333">Golgi apparatus</keyword>
<keyword id="KW-1267">Proteomics identification</keyword>
<keyword id="KW-1185">Reference proteome</keyword>
<protein>
    <recommendedName>
        <fullName>Ciliary microtubule-associated protein 3</fullName>
    </recommendedName>
    <alternativeName>
        <fullName>Protein pitchfork</fullName>
    </alternativeName>
</protein>